<accession>B7JJA4</accession>
<reference key="1">
    <citation type="submission" date="2008-10" db="EMBL/GenBank/DDBJ databases">
        <title>Genome sequence of Bacillus cereus AH820.</title>
        <authorList>
            <person name="Dodson R.J."/>
            <person name="Durkin A.S."/>
            <person name="Rosovitz M.J."/>
            <person name="Rasko D.A."/>
            <person name="Hoffmaster A."/>
            <person name="Ravel J."/>
            <person name="Sutton G."/>
        </authorList>
    </citation>
    <scope>NUCLEOTIDE SEQUENCE [LARGE SCALE GENOMIC DNA]</scope>
    <source>
        <strain>AH820</strain>
    </source>
</reference>
<organism>
    <name type="scientific">Bacillus cereus (strain AH820)</name>
    <dbReference type="NCBI Taxonomy" id="405535"/>
    <lineage>
        <taxon>Bacteria</taxon>
        <taxon>Bacillati</taxon>
        <taxon>Bacillota</taxon>
        <taxon>Bacilli</taxon>
        <taxon>Bacillales</taxon>
        <taxon>Bacillaceae</taxon>
        <taxon>Bacillus</taxon>
        <taxon>Bacillus cereus group</taxon>
    </lineage>
</organism>
<feature type="chain" id="PRO_1000116688" description="Elongation factor Ts">
    <location>
        <begin position="1"/>
        <end position="295"/>
    </location>
</feature>
<feature type="region of interest" description="Involved in Mg(2+) ion dislocation from EF-Tu" evidence="1">
    <location>
        <begin position="79"/>
        <end position="82"/>
    </location>
</feature>
<name>EFTS_BACC0</name>
<evidence type="ECO:0000255" key="1">
    <source>
        <dbReference type="HAMAP-Rule" id="MF_00050"/>
    </source>
</evidence>
<keyword id="KW-0963">Cytoplasm</keyword>
<keyword id="KW-0251">Elongation factor</keyword>
<keyword id="KW-0648">Protein biosynthesis</keyword>
<gene>
    <name evidence="1" type="primary">tsf</name>
    <name type="ordered locus">BCAH820_3838</name>
</gene>
<dbReference type="EMBL" id="CP001283">
    <property type="protein sequence ID" value="ACK89544.1"/>
    <property type="molecule type" value="Genomic_DNA"/>
</dbReference>
<dbReference type="RefSeq" id="WP_001018581.1">
    <property type="nucleotide sequence ID" value="NC_011773.1"/>
</dbReference>
<dbReference type="SMR" id="B7JJA4"/>
<dbReference type="GeneID" id="45023654"/>
<dbReference type="KEGG" id="bcu:BCAH820_3838"/>
<dbReference type="HOGENOM" id="CLU_047155_0_2_9"/>
<dbReference type="Proteomes" id="UP000001363">
    <property type="component" value="Chromosome"/>
</dbReference>
<dbReference type="GO" id="GO:0005737">
    <property type="term" value="C:cytoplasm"/>
    <property type="evidence" value="ECO:0007669"/>
    <property type="project" value="UniProtKB-SubCell"/>
</dbReference>
<dbReference type="GO" id="GO:0003746">
    <property type="term" value="F:translation elongation factor activity"/>
    <property type="evidence" value="ECO:0007669"/>
    <property type="project" value="UniProtKB-UniRule"/>
</dbReference>
<dbReference type="CDD" id="cd14275">
    <property type="entry name" value="UBA_EF-Ts"/>
    <property type="match status" value="1"/>
</dbReference>
<dbReference type="FunFam" id="1.10.286.20:FF:000003">
    <property type="entry name" value="Elongation factor Ts"/>
    <property type="match status" value="1"/>
</dbReference>
<dbReference type="FunFam" id="1.10.8.10:FF:000001">
    <property type="entry name" value="Elongation factor Ts"/>
    <property type="match status" value="1"/>
</dbReference>
<dbReference type="FunFam" id="3.30.479.20:FF:000005">
    <property type="entry name" value="Elongation factor Ts"/>
    <property type="match status" value="1"/>
</dbReference>
<dbReference type="Gene3D" id="1.10.286.20">
    <property type="match status" value="1"/>
</dbReference>
<dbReference type="Gene3D" id="1.10.8.10">
    <property type="entry name" value="DNA helicase RuvA subunit, C-terminal domain"/>
    <property type="match status" value="1"/>
</dbReference>
<dbReference type="Gene3D" id="3.30.479.20">
    <property type="entry name" value="Elongation factor Ts, dimerisation domain"/>
    <property type="match status" value="2"/>
</dbReference>
<dbReference type="HAMAP" id="MF_00050">
    <property type="entry name" value="EF_Ts"/>
    <property type="match status" value="1"/>
</dbReference>
<dbReference type="InterPro" id="IPR036402">
    <property type="entry name" value="EF-Ts_dimer_sf"/>
</dbReference>
<dbReference type="InterPro" id="IPR001816">
    <property type="entry name" value="Transl_elong_EFTs/EF1B"/>
</dbReference>
<dbReference type="InterPro" id="IPR014039">
    <property type="entry name" value="Transl_elong_EFTs/EF1B_dimer"/>
</dbReference>
<dbReference type="InterPro" id="IPR018101">
    <property type="entry name" value="Transl_elong_Ts_CS"/>
</dbReference>
<dbReference type="InterPro" id="IPR009060">
    <property type="entry name" value="UBA-like_sf"/>
</dbReference>
<dbReference type="NCBIfam" id="TIGR00116">
    <property type="entry name" value="tsf"/>
    <property type="match status" value="1"/>
</dbReference>
<dbReference type="PANTHER" id="PTHR11741">
    <property type="entry name" value="ELONGATION FACTOR TS"/>
    <property type="match status" value="1"/>
</dbReference>
<dbReference type="PANTHER" id="PTHR11741:SF0">
    <property type="entry name" value="ELONGATION FACTOR TS, MITOCHONDRIAL"/>
    <property type="match status" value="1"/>
</dbReference>
<dbReference type="Pfam" id="PF00889">
    <property type="entry name" value="EF_TS"/>
    <property type="match status" value="1"/>
</dbReference>
<dbReference type="SUPFAM" id="SSF54713">
    <property type="entry name" value="Elongation factor Ts (EF-Ts), dimerisation domain"/>
    <property type="match status" value="2"/>
</dbReference>
<dbReference type="SUPFAM" id="SSF46934">
    <property type="entry name" value="UBA-like"/>
    <property type="match status" value="1"/>
</dbReference>
<dbReference type="PROSITE" id="PS01126">
    <property type="entry name" value="EF_TS_1"/>
    <property type="match status" value="1"/>
</dbReference>
<dbReference type="PROSITE" id="PS01127">
    <property type="entry name" value="EF_TS_2"/>
    <property type="match status" value="1"/>
</dbReference>
<proteinExistence type="inferred from homology"/>
<protein>
    <recommendedName>
        <fullName evidence="1">Elongation factor Ts</fullName>
        <shortName evidence="1">EF-Ts</shortName>
    </recommendedName>
</protein>
<sequence>MAITAQMVKELREKTGAGMMDCKKALTETNGDMEKAIDFLREKGIAKAAKKADRIAAEGLTFIETNGNDGLILELNSETDFVAKNEGFQTLIKELAAHLLANKPANVEEAMAQTMENGKKVEEHINEAIAKIGEKLTLRRFEIVSKTDADAFGAYLHMGGRIGVLTVLEGSTDEAAAKDVAMHIAAVNPKYIDRDAVTAEEVEHERQVLTQQALNEGKPEKIVAKMVEGRLGKFFEEICLLDQAFVKNPDMKVRQFVESKGGTLKGFVRYAVGEGIEKREDNFAEEVMNQVKGSN</sequence>
<comment type="function">
    <text evidence="1">Associates with the EF-Tu.GDP complex and induces the exchange of GDP to GTP. It remains bound to the aminoacyl-tRNA.EF-Tu.GTP complex up to the GTP hydrolysis stage on the ribosome.</text>
</comment>
<comment type="subcellular location">
    <subcellularLocation>
        <location evidence="1">Cytoplasm</location>
    </subcellularLocation>
</comment>
<comment type="similarity">
    <text evidence="1">Belongs to the EF-Ts family.</text>
</comment>